<accession>Q6ZRS2</accession>
<accession>B0JZA6</accession>
<accession>O15026</accession>
<accession>Q7Z744</accession>
<accession>Q9Y5L9</accession>
<sequence length="3230" mass="343555">MQSSPSPAHPQLPVLQTQMVSDGMTGSNPVSPASSSSPASSGAGGISPQHIAQDSSLDGPPGPPDGATVPLEGFSLSQAADLANKGPKWEKSHAEIAEQAKHEAEIETRIAELRKEGFWSLKRLPKVPEPPRPKGHWDYLCEEMQWLSADFAQERRWKRGVARKVVRMVIRHHEEQRQKEERARREEQAKLRRIASTMAKDVRQFWSNVEKVVQFKQQSRLEEKRKKALDLHLDFIVGQTEKYSDLLSQSLNQPLTSSKAGSSPCLGSSSAASSPPPPASRLDDEDGDFQPQEDEEEDDEETIEVEEQQEGNDAEAQRREIELLRREGELPLEELLRSLPPQLLEGPSSPSQTPSSHDSDTRDGPEEGAEEEPPQVLEIKPPPSAVTQRNKQPWHPDEDDEEFTANEEEAEDEEDTIAAEEQLEGEVDHAMELSELAREGELSMEELLQQYAGAYAPGSGSSEDEDEDEVDANSSDCEPEGPVEAEEPPQEDSSSQSDSVEDRSEDEEDEHSEEEETSGSSASEESESEESEDAQSQSQADEEEEDDDFGVEYLLARDEEQSEADAGSGPPTPGPTTLGPKKEITDIAAAAESLQPKGYTLATTQVKTPIPLLLRGQLREYQHIGLDWLVTMYEKKLNGILADEMGLGKTIQTISLLAHLACEKGNWGPHLIIVPTSVMLNWEMELKRWCPSFKILTYYGAQKERKLKRQGWTKPNAFHVCITSYKLVLQDHQAFRRKNWRYLILDEAQNIKNFKSQRWQSLLNFNSQRRLLLTGTPLQNSLMELWSLMHFLMPHVFQSHREFKEWFSNPLTGMIEGSQEYNEGLVKRLHKVLRPFLLRRVKVDVEKQMPKKYEHVIRCRLSKRQRCLYDDFMAQTTTKETLATGHFMSVINILMQLRKVCNHPNLFDPRPVTSPFITPGICFSTASLVLRATDVHPLQRIDMGRFDLIGLEGRVSRYEADTFLPRHRLSRRVLLEVATAPDPPPRPKPVKMKVNRMLQPVPKQEGRTVVVVNNPRAPLGPVPVRPPPGPELSAQPTPGPVPQVLPASLMVSASPAGPPLIPASRPPGPVLLPPLQPNSGSLPQVLPSPLGVLSGTSRPPTPTLSLKPTPPAPVRLSPAPPPGSSSLLKPLTVPPGYTFPPAAATTTSTTTATATTTAVPAPTPAPQRLILSPDMQARLPSGEVVSIGQLASLAQRPVANAGGSKPLTFQIQGNKLTLTGAQVRQLAVGQPRPLQRNVVHLVSAGGQHHLISQPAHVALIQAVAPTPGPTPVSVLPSSTPSTTPAPTGLSLPLAANQVPPTMVNNTGVVKIVVRQAPRDGLTPVPPLAPAPRPPSSGLPAVLNPRPTLTPGRLPTPTLGTARAPMPTPTLVRPLLKLVHSPSPEVSASAPGAAPLTISSPLHVPSSLPGPASSPMPIPNSSPLASPVSSTVSVPLSSSLPISVPTTLPAPASAPLTIPISAPLTVSASGPALLTSVTPPLAPVVPAAPGPPSLAPSGASPSASALTLGLATAPSLSSSQTPGHPLLLAPTSSHVPGLNSTVAPACSPVLVPASALASPFPSAPNPAPAQASLLAPASSASQALATPLAPMAAPQTAILAPSPAPPLAPLPVLAPSPGAAPVLASSQTPVPVMAPSSTPGTSLASASPVPAPTPVLAPSSTQTMLPAPVPSPLPSPASTQTLALAPALAPTLGGSSPSQTLSLGTGNPQGPFPTQTLSLTPASSLVPTPAQTLSLAPGPPLGPTQTLSLAPAPPLAPASPVGPAPAHTLTLAPASSSASLLAPASVQTLTLSPAPVPTLGPAAAQTLALAPASTQSPASQASSLVVSASGAAPLPVTMVSRLPVSKDEPDTLTLRSGPPSPPSTATSFGGPRPRRQPPPPPRSPFYLDSLEEKRKRQRSERLERIFQLSEAHGALAPVYGTEVLDFCTLPQPVASPIGPRSPGPSHPTFWTYTEAAHRAVLFPQQRLDQLSEIIERFIFVMPPVEAPPPSLHACHPPPWLAPRQAAFQEQLASELWPRARPLHRIVCNMRTQFPDLRLIQYDCGKLQTLAVLLRQLKAEGHRVLIFTQMTRMLDVLEQFLTYHGHLYLRLDGSTRVEQRQALMERFNADKRIFCFILSTRSGGVGVNLTGADTVVFYDSDWNPTMDAQAQDRCHRIGQTRDVHIYRLISERTVEENILKKANQKRMLGDMAIEGGNFTTAYFKQQTIRELFDMPLEEPSSSSVPSAPEEEEETVASKQTHILEQALCRAEDEEDIRAATQAKAEQVAELAEFNENDGFPAGEGEEAGRPGAEDEEMSRAEQEIAALVEQLTPIERYAMKFLEASLEEVSREELKQAEEQVEAARKDLDQAKEEVFRLPQEEEEGPGAGDESSCGTGGGTHRRSKKAKAPERPGTRVSERLRGARAETQGANHTPVISAHQTRSTTTPPRCSPARERVPRPAPRPRPTPASAPAAIPALVPVPVSAPVPISAPNPITILPVHILPSPPPPSQIPPCSSPACTPPPACTPPPAHTPPPAQTCLVTPSSPLLLGPPSVPISASVTNLPLGLRPEAELCAQALASPESLELASVASSETSSLSLVPPKDLLPVAVEILPVSEKNLSLTPSAPSLTLEAGSIPNGQEQEAPDSAEGTTLTVLPEGEELPLCVSESNGLELPPSAASDEPLQEPLEADRTSEELTEAKTPTSSPEKPQELVTAEVAAPSTSSSATSSPEGPSPARPPRRRTSADVEIRGQGTGRPGQPPGPKVLRKLPGRLVTVVEEKELVRRRRQQRGAASTLVPGVSETSASPGSPSVRSMSGPESSPPIGGPCEAAPSSSLPTPPQQPFIARRHIELGVTGGGSPENGDGALLAITPPAVKRRRGRPPKKNRSPADAGRGVDEAPSSTLKGKTNGADPVPGPETLIVADPVLEPQLIPGPQPLGPQPVHRPNPLLSPVEKRRRGRPPKARDLPIPGTISSAGDGNSESRTQPPPHPSPLTPLPPLLVCPTATVANTVTTVTISTSPPKRKRGRPPKNPPSPRPSQLPVLDRDSTSVLESCGLGRRRQPQGQGESEGSSSDEDGSRPLTRLARLRLEAEGMRGRKSGGSMVVAVIQDDLDLADSGPGGLELTPPVVSLTPKLRSTRLRPGSLVPPLETEKLPRKRAGAPVGGSPGLAKRGRLQPPSPLGPEGSVEESEAEASGEEEEGDGTPRRRPGPRRLVGTTNQGDQRILRSSAPPSLAGPAVSHRGRKAKT</sequence>
<organism>
    <name type="scientific">Homo sapiens</name>
    <name type="common">Human</name>
    <dbReference type="NCBI Taxonomy" id="9606"/>
    <lineage>
        <taxon>Eukaryota</taxon>
        <taxon>Metazoa</taxon>
        <taxon>Chordata</taxon>
        <taxon>Craniata</taxon>
        <taxon>Vertebrata</taxon>
        <taxon>Euteleostomi</taxon>
        <taxon>Mammalia</taxon>
        <taxon>Eutheria</taxon>
        <taxon>Euarchontoglires</taxon>
        <taxon>Primates</taxon>
        <taxon>Haplorrhini</taxon>
        <taxon>Catarrhini</taxon>
        <taxon>Hominidae</taxon>
        <taxon>Homo</taxon>
    </lineage>
</organism>
<evidence type="ECO:0000255" key="1">
    <source>
        <dbReference type="PROSITE-ProRule" id="PRU00541"/>
    </source>
</evidence>
<evidence type="ECO:0000255" key="2">
    <source>
        <dbReference type="PROSITE-ProRule" id="PRU00542"/>
    </source>
</evidence>
<evidence type="ECO:0000255" key="3">
    <source>
        <dbReference type="PROSITE-ProRule" id="PRU00549"/>
    </source>
</evidence>
<evidence type="ECO:0000256" key="4">
    <source>
        <dbReference type="SAM" id="MobiDB-lite"/>
    </source>
</evidence>
<evidence type="ECO:0000269" key="5">
    <source>
    </source>
</evidence>
<evidence type="ECO:0000269" key="6">
    <source>
    </source>
</evidence>
<evidence type="ECO:0000269" key="7">
    <source>
    </source>
</evidence>
<evidence type="ECO:0000269" key="8">
    <source>
    </source>
</evidence>
<evidence type="ECO:0000269" key="9">
    <source>
    </source>
</evidence>
<evidence type="ECO:0000269" key="10">
    <source>
    </source>
</evidence>
<evidence type="ECO:0000269" key="11">
    <source>
    </source>
</evidence>
<evidence type="ECO:0000269" key="12">
    <source>
    </source>
</evidence>
<evidence type="ECO:0000269" key="13">
    <source>
    </source>
</evidence>
<evidence type="ECO:0000269" key="14">
    <source>
    </source>
</evidence>
<evidence type="ECO:0000269" key="15">
    <source>
    </source>
</evidence>
<evidence type="ECO:0000269" key="16">
    <source>
    </source>
</evidence>
<evidence type="ECO:0000303" key="17">
    <source>
    </source>
</evidence>
<evidence type="ECO:0000303" key="18">
    <source>
    </source>
</evidence>
<evidence type="ECO:0000303" key="19">
    <source>
    </source>
</evidence>
<evidence type="ECO:0000305" key="20"/>
<evidence type="ECO:0007744" key="21">
    <source>
    </source>
</evidence>
<proteinExistence type="evidence at protein level"/>
<reference key="1">
    <citation type="journal article" date="2004" name="Nature">
        <title>The sequence and analysis of duplication-rich human chromosome 16.</title>
        <authorList>
            <person name="Martin J."/>
            <person name="Han C."/>
            <person name="Gordon L.A."/>
            <person name="Terry A."/>
            <person name="Prabhakar S."/>
            <person name="She X."/>
            <person name="Xie G."/>
            <person name="Hellsten U."/>
            <person name="Chan Y.M."/>
            <person name="Altherr M."/>
            <person name="Couronne O."/>
            <person name="Aerts A."/>
            <person name="Bajorek E."/>
            <person name="Black S."/>
            <person name="Blumer H."/>
            <person name="Branscomb E."/>
            <person name="Brown N.C."/>
            <person name="Bruno W.J."/>
            <person name="Buckingham J.M."/>
            <person name="Callen D.F."/>
            <person name="Campbell C.S."/>
            <person name="Campbell M.L."/>
            <person name="Campbell E.W."/>
            <person name="Caoile C."/>
            <person name="Challacombe J.F."/>
            <person name="Chasteen L.A."/>
            <person name="Chertkov O."/>
            <person name="Chi H.C."/>
            <person name="Christensen M."/>
            <person name="Clark L.M."/>
            <person name="Cohn J.D."/>
            <person name="Denys M."/>
            <person name="Detter J.C."/>
            <person name="Dickson M."/>
            <person name="Dimitrijevic-Bussod M."/>
            <person name="Escobar J."/>
            <person name="Fawcett J.J."/>
            <person name="Flowers D."/>
            <person name="Fotopulos D."/>
            <person name="Glavina T."/>
            <person name="Gomez M."/>
            <person name="Gonzales E."/>
            <person name="Goodstein D."/>
            <person name="Goodwin L.A."/>
            <person name="Grady D.L."/>
            <person name="Grigoriev I."/>
            <person name="Groza M."/>
            <person name="Hammon N."/>
            <person name="Hawkins T."/>
            <person name="Haydu L."/>
            <person name="Hildebrand C.E."/>
            <person name="Huang W."/>
            <person name="Israni S."/>
            <person name="Jett J."/>
            <person name="Jewett P.B."/>
            <person name="Kadner K."/>
            <person name="Kimball H."/>
            <person name="Kobayashi A."/>
            <person name="Krawczyk M.-C."/>
            <person name="Leyba T."/>
            <person name="Longmire J.L."/>
            <person name="Lopez F."/>
            <person name="Lou Y."/>
            <person name="Lowry S."/>
            <person name="Ludeman T."/>
            <person name="Manohar C.F."/>
            <person name="Mark G.A."/>
            <person name="McMurray K.L."/>
            <person name="Meincke L.J."/>
            <person name="Morgan J."/>
            <person name="Moyzis R.K."/>
            <person name="Mundt M.O."/>
            <person name="Munk A.C."/>
            <person name="Nandkeshwar R.D."/>
            <person name="Pitluck S."/>
            <person name="Pollard M."/>
            <person name="Predki P."/>
            <person name="Parson-Quintana B."/>
            <person name="Ramirez L."/>
            <person name="Rash S."/>
            <person name="Retterer J."/>
            <person name="Ricke D.O."/>
            <person name="Robinson D.L."/>
            <person name="Rodriguez A."/>
            <person name="Salamov A."/>
            <person name="Saunders E.H."/>
            <person name="Scott D."/>
            <person name="Shough T."/>
            <person name="Stallings R.L."/>
            <person name="Stalvey M."/>
            <person name="Sutherland R.D."/>
            <person name="Tapia R."/>
            <person name="Tesmer J.G."/>
            <person name="Thayer N."/>
            <person name="Thompson L.S."/>
            <person name="Tice H."/>
            <person name="Torney D.C."/>
            <person name="Tran-Gyamfi M."/>
            <person name="Tsai M."/>
            <person name="Ulanovsky L.E."/>
            <person name="Ustaszewska A."/>
            <person name="Vo N."/>
            <person name="White P.S."/>
            <person name="Williams A.L."/>
            <person name="Wills P.L."/>
            <person name="Wu J.-R."/>
            <person name="Wu K."/>
            <person name="Yang J."/>
            <person name="DeJong P."/>
            <person name="Bruce D."/>
            <person name="Doggett N.A."/>
            <person name="Deaven L."/>
            <person name="Schmutz J."/>
            <person name="Grimwood J."/>
            <person name="Richardson P."/>
            <person name="Rokhsar D.S."/>
            <person name="Eichler E.E."/>
            <person name="Gilna P."/>
            <person name="Lucas S.M."/>
            <person name="Myers R.M."/>
            <person name="Rubin E.M."/>
            <person name="Pennacchio L.A."/>
        </authorList>
    </citation>
    <scope>NUCLEOTIDE SEQUENCE [LARGE SCALE GENOMIC DNA]</scope>
</reference>
<reference key="2">
    <citation type="journal article" date="2004" name="Nat. Genet.">
        <title>Complete sequencing and characterization of 21,243 full-length human cDNAs.</title>
        <authorList>
            <person name="Ota T."/>
            <person name="Suzuki Y."/>
            <person name="Nishikawa T."/>
            <person name="Otsuki T."/>
            <person name="Sugiyama T."/>
            <person name="Irie R."/>
            <person name="Wakamatsu A."/>
            <person name="Hayashi K."/>
            <person name="Sato H."/>
            <person name="Nagai K."/>
            <person name="Kimura K."/>
            <person name="Makita H."/>
            <person name="Sekine M."/>
            <person name="Obayashi M."/>
            <person name="Nishi T."/>
            <person name="Shibahara T."/>
            <person name="Tanaka T."/>
            <person name="Ishii S."/>
            <person name="Yamamoto J."/>
            <person name="Saito K."/>
            <person name="Kawai Y."/>
            <person name="Isono Y."/>
            <person name="Nakamura Y."/>
            <person name="Nagahari K."/>
            <person name="Murakami K."/>
            <person name="Yasuda T."/>
            <person name="Iwayanagi T."/>
            <person name="Wagatsuma M."/>
            <person name="Shiratori A."/>
            <person name="Sudo H."/>
            <person name="Hosoiri T."/>
            <person name="Kaku Y."/>
            <person name="Kodaira H."/>
            <person name="Kondo H."/>
            <person name="Sugawara M."/>
            <person name="Takahashi M."/>
            <person name="Kanda K."/>
            <person name="Yokoi T."/>
            <person name="Furuya T."/>
            <person name="Kikkawa E."/>
            <person name="Omura Y."/>
            <person name="Abe K."/>
            <person name="Kamihara K."/>
            <person name="Katsuta N."/>
            <person name="Sato K."/>
            <person name="Tanikawa M."/>
            <person name="Yamazaki M."/>
            <person name="Ninomiya K."/>
            <person name="Ishibashi T."/>
            <person name="Yamashita H."/>
            <person name="Murakawa K."/>
            <person name="Fujimori K."/>
            <person name="Tanai H."/>
            <person name="Kimata M."/>
            <person name="Watanabe M."/>
            <person name="Hiraoka S."/>
            <person name="Chiba Y."/>
            <person name="Ishida S."/>
            <person name="Ono Y."/>
            <person name="Takiguchi S."/>
            <person name="Watanabe S."/>
            <person name="Yosida M."/>
            <person name="Hotuta T."/>
            <person name="Kusano J."/>
            <person name="Kanehori K."/>
            <person name="Takahashi-Fujii A."/>
            <person name="Hara H."/>
            <person name="Tanase T.-O."/>
            <person name="Nomura Y."/>
            <person name="Togiya S."/>
            <person name="Komai F."/>
            <person name="Hara R."/>
            <person name="Takeuchi K."/>
            <person name="Arita M."/>
            <person name="Imose N."/>
            <person name="Musashino K."/>
            <person name="Yuuki H."/>
            <person name="Oshima A."/>
            <person name="Sasaki N."/>
            <person name="Aotsuka S."/>
            <person name="Yoshikawa Y."/>
            <person name="Matsunawa H."/>
            <person name="Ichihara T."/>
            <person name="Shiohata N."/>
            <person name="Sano S."/>
            <person name="Moriya S."/>
            <person name="Momiyama H."/>
            <person name="Satoh N."/>
            <person name="Takami S."/>
            <person name="Terashima Y."/>
            <person name="Suzuki O."/>
            <person name="Nakagawa S."/>
            <person name="Senoh A."/>
            <person name="Mizoguchi H."/>
            <person name="Goto Y."/>
            <person name="Shimizu F."/>
            <person name="Wakebe H."/>
            <person name="Hishigaki H."/>
            <person name="Watanabe T."/>
            <person name="Sugiyama A."/>
            <person name="Takemoto M."/>
            <person name="Kawakami B."/>
            <person name="Yamazaki M."/>
            <person name="Watanabe K."/>
            <person name="Kumagai A."/>
            <person name="Itakura S."/>
            <person name="Fukuzumi Y."/>
            <person name="Fujimori Y."/>
            <person name="Komiyama M."/>
            <person name="Tashiro H."/>
            <person name="Tanigami A."/>
            <person name="Fujiwara T."/>
            <person name="Ono T."/>
            <person name="Yamada K."/>
            <person name="Fujii Y."/>
            <person name="Ozaki K."/>
            <person name="Hirao M."/>
            <person name="Ohmori Y."/>
            <person name="Kawabata A."/>
            <person name="Hikiji T."/>
            <person name="Kobatake N."/>
            <person name="Inagaki H."/>
            <person name="Ikema Y."/>
            <person name="Okamoto S."/>
            <person name="Okitani R."/>
            <person name="Kawakami T."/>
            <person name="Noguchi S."/>
            <person name="Itoh T."/>
            <person name="Shigeta K."/>
            <person name="Senba T."/>
            <person name="Matsumura K."/>
            <person name="Nakajima Y."/>
            <person name="Mizuno T."/>
            <person name="Morinaga M."/>
            <person name="Sasaki M."/>
            <person name="Togashi T."/>
            <person name="Oyama M."/>
            <person name="Hata H."/>
            <person name="Watanabe M."/>
            <person name="Komatsu T."/>
            <person name="Mizushima-Sugano J."/>
            <person name="Satoh T."/>
            <person name="Shirai Y."/>
            <person name="Takahashi Y."/>
            <person name="Nakagawa K."/>
            <person name="Okumura K."/>
            <person name="Nagase T."/>
            <person name="Nomura N."/>
            <person name="Kikuchi H."/>
            <person name="Masuho Y."/>
            <person name="Yamashita R."/>
            <person name="Nakai K."/>
            <person name="Yada T."/>
            <person name="Nakamura Y."/>
            <person name="Ohara O."/>
            <person name="Isogai T."/>
            <person name="Sugano S."/>
        </authorList>
    </citation>
    <scope>NUCLEOTIDE SEQUENCE [LARGE SCALE MRNA] OF 1-2427 (ISOFORM 1)</scope>
    <source>
        <tissue>Testis</tissue>
    </source>
</reference>
<reference key="3">
    <citation type="journal article" date="1997" name="DNA Res.">
        <title>Prediction of the coding sequences of unidentified human genes. VII. The complete sequences of 100 new cDNA clones from brain which can code for large proteins in vitro.</title>
        <authorList>
            <person name="Nagase T."/>
            <person name="Ishikawa K."/>
            <person name="Nakajima D."/>
            <person name="Ohira M."/>
            <person name="Seki N."/>
            <person name="Miyajima N."/>
            <person name="Tanaka A."/>
            <person name="Kotani H."/>
            <person name="Nomura N."/>
            <person name="Ohara O."/>
        </authorList>
    </citation>
    <scope>NUCLEOTIDE SEQUENCE [LARGE SCALE MRNA] OF 20-3230 (ISOFORM 3)</scope>
    <source>
        <tissue>Brain</tissue>
    </source>
</reference>
<reference key="4">
    <citation type="submission" date="2003-08" db="EMBL/GenBank/DDBJ databases">
        <authorList>
            <person name="Ohara O."/>
            <person name="Nagase T."/>
            <person name="Kikuno R."/>
            <person name="Nomura N."/>
        </authorList>
    </citation>
    <scope>SEQUENCE REVISION</scope>
</reference>
<reference key="5">
    <citation type="journal article" date="2004" name="Genome Res.">
        <title>The status, quality, and expansion of the NIH full-length cDNA project: the Mammalian Gene Collection (MGC).</title>
        <authorList>
            <consortium name="The MGC Project Team"/>
        </authorList>
    </citation>
    <scope>NUCLEOTIDE SEQUENCE [LARGE SCALE MRNA] OF 20-3230 (ISOFORM 3)</scope>
</reference>
<reference key="6">
    <citation type="journal article" date="1999" name="J. Biol. Chem.">
        <title>Identification of a novel SNF2/SWI2 protein family member, SRCAP, which interacts with CREB-binding protein.</title>
        <authorList>
            <person name="Johnston H."/>
            <person name="Kneer J."/>
            <person name="Chackalaparampil I."/>
            <person name="Yaciuk P."/>
            <person name="Chrivia J."/>
        </authorList>
    </citation>
    <scope>NUCLEOTIDE SEQUENCE [MRNA] OF 128-3230 (ISOFORM 2)</scope>
    <scope>INTERACTION WITH CREBBP</scope>
    <scope>BIOPHYSICOCHEMICAL PROPERTIES</scope>
    <scope>FUNCTION</scope>
</reference>
<reference key="7">
    <citation type="journal article" date="2000" name="J. Biol. Chem.">
        <title>Hepatitis C virus NS5A protein modulates transcription through a novel cellular transcription factor SRCAP.</title>
        <authorList>
            <person name="Ghosh A.K."/>
            <person name="Majumder M."/>
            <person name="Steele R."/>
            <person name="Yaciuk P."/>
            <person name="Chrivia J."/>
            <person name="Ray R."/>
            <person name="Ray R.B."/>
        </authorList>
    </citation>
    <scope>INTERACTION WITH HCV NS5A (MICROBIAL INFECTION)</scope>
    <scope>SUBCELLULAR LOCATION</scope>
</reference>
<reference key="8">
    <citation type="journal article" date="2001" name="J. Biol. Chem.">
        <title>Regulation of cAMP-responsive element-binding protein-mediated transcription by the SNF2/SWI-related protein, SRCAP.</title>
        <authorList>
            <person name="Monroy M.A."/>
            <person name="Ruhl D.D."/>
            <person name="Xu X."/>
            <person name="Granner D.K."/>
            <person name="Yaciuk P."/>
            <person name="Chrivia J.C."/>
        </authorList>
    </citation>
    <scope>FUNCTION</scope>
</reference>
<reference key="9">
    <citation type="journal article" date="2001" name="J. Virol.">
        <title>Adenovirus DNA binding protein interacts with the SNF2-related CBP activator protein (SrCap) and inhibits SrCap-mediated transcription.</title>
        <authorList>
            <person name="Xu X."/>
            <person name="Chackalaparampil I."/>
            <person name="Monroy M.A."/>
            <person name="Cannella M.T."/>
            <person name="Pesek E."/>
            <person name="Chrivia J."/>
            <person name="Yaciuk P."/>
        </authorList>
    </citation>
    <scope>INTERACTION WITH EP300 AND HADV-2 DBP (MICROBIAL INFECTION)</scope>
</reference>
<reference key="10">
    <citation type="journal article" date="2003" name="Mol. Endocrinol.">
        <title>SNF2-related CBP activator protein (SRCAP) functions as a coactivator of steroid receptor-mediated transcription through synergistic interactions with CARM-1 and GRIP-1.</title>
        <authorList>
            <person name="Monroy M.A."/>
            <person name="Schott N.M."/>
            <person name="Cox L."/>
            <person name="Chen J.D."/>
            <person name="Ruh M."/>
            <person name="Chrivia J.C."/>
        </authorList>
    </citation>
    <scope>FUNCTION</scope>
    <scope>IDENTIFICATION IN COMPLEX WITH CREBBP; CARM1 AND GRIP1</scope>
</reference>
<reference key="11">
    <citation type="journal article" date="2004" name="Mol. Cell. Biol.">
        <title>Structural and functional conservation of the NuA4 histone acetyltransferase complex from yeast to humans.</title>
        <authorList>
            <person name="Doyon Y."/>
            <person name="Selleck W."/>
            <person name="Lane W.S."/>
            <person name="Tan S."/>
            <person name="Cote J."/>
        </authorList>
    </citation>
    <scope>IDENTIFICATION IN A NUA4-RELATED COMPLEX</scope>
</reference>
<reference key="12">
    <citation type="journal article" date="2005" name="J. Biol. Chem.">
        <title>The mammalian YL1 protein is a shared subunit of the TRRAP/TIP60 histone acetyltransferase and SRCAP complexes.</title>
        <authorList>
            <person name="Cai Y."/>
            <person name="Jin J."/>
            <person name="Florens L."/>
            <person name="Swanson S.K."/>
            <person name="Kusch T."/>
            <person name="Li B."/>
            <person name="Workman J.L."/>
            <person name="Washburn M.P."/>
            <person name="Conaway R.C."/>
            <person name="Conaway J.W."/>
        </authorList>
    </citation>
    <scope>IDENTIFICATION IN THE SRCAP COMPLEX</scope>
    <scope>IDENTIFICATION BY MASS SPECTROMETRY</scope>
</reference>
<reference key="13">
    <citation type="journal article" date="2005" name="Mol. Cell. Biol.">
        <title>Human SRCAP and Drosophila melanogaster DOM are homologs that function in the notch signaling pathway.</title>
        <authorList>
            <person name="Eissenberg J.C."/>
            <person name="Wong M."/>
            <person name="Chrivia J.C."/>
        </authorList>
    </citation>
    <scope>FUNCTION</scope>
</reference>
<reference key="14">
    <citation type="journal article" date="2006" name="Biochemistry">
        <title>Purification of a human SRCAP complex that remodels chromatin by incorporating the histone variant H2A.Z into nucleosomes.</title>
        <authorList>
            <person name="Ruhl D.D."/>
            <person name="Jin J."/>
            <person name="Cai Y."/>
            <person name="Swanson S."/>
            <person name="Florens L."/>
            <person name="Washburn M.P."/>
            <person name="Conaway R.C."/>
            <person name="Conaway J.W."/>
            <person name="Chrivia J.C."/>
        </authorList>
    </citation>
    <scope>IDENTIFICATION IN THE SRCAP COMPLEX</scope>
    <scope>FUNCTION</scope>
    <scope>IDENTIFICATION BY MASS SPECTROMETRY</scope>
</reference>
<reference key="15">
    <citation type="journal article" date="2007" name="J. Biol. Chem.">
        <title>The chromatin remodeling protein, SRCAP, is critical for deposition of the histone variant H2A.Z at promoters.</title>
        <authorList>
            <person name="Wong M.M."/>
            <person name="Cox L.K."/>
            <person name="Chrivia J.C."/>
        </authorList>
    </citation>
    <scope>FUNCTION</scope>
</reference>
<reference key="16">
    <citation type="journal article" date="2012" name="Am. J. Hum. Genet.">
        <title>Mutations in SRCAP, encoding SNF2-related CREBBP activator protein, cause Floating-Harbor syndrome.</title>
        <authorList>
            <person name="Hood R.L."/>
            <person name="Lines M.A."/>
            <person name="Nikkel S.M."/>
            <person name="Schwartzentruber J."/>
            <person name="Beaulieu C."/>
            <person name="Nowaczyk M.J."/>
            <person name="Allanson J."/>
            <person name="Kim C.A."/>
            <person name="Wieczorek D."/>
            <person name="Moilanen J.S."/>
            <person name="Lacombe D."/>
            <person name="Gillessen-Kaesbach G."/>
            <person name="Whiteford M.L."/>
            <person name="Quaio C.R."/>
            <person name="Gomy I."/>
            <person name="Bertola D.R."/>
            <person name="Albrecht B."/>
            <person name="Platzer K."/>
            <person name="McGillivray G."/>
            <person name="Zou R."/>
            <person name="McLeod D.R."/>
            <person name="Chudley A.E."/>
            <person name="Chodirker B.N."/>
            <person name="Marcadier J."/>
            <person name="Majewski J."/>
            <person name="Bulman D.E."/>
            <person name="White S.M."/>
            <person name="Boycott K.M."/>
        </authorList>
    </citation>
    <scope>INVOLVEMENT IN FLHS</scope>
    <scope>VARIANTS FLHS 2435-ARG--THR-3230 DEL AND 2444-ARG--THR-3230 DEL</scope>
</reference>
<reference key="17">
    <citation type="journal article" date="2013" name="J. Proteome Res.">
        <title>Toward a comprehensive characterization of a human cancer cell phosphoproteome.</title>
        <authorList>
            <person name="Zhou H."/>
            <person name="Di Palma S."/>
            <person name="Preisinger C."/>
            <person name="Peng M."/>
            <person name="Polat A.N."/>
            <person name="Heck A.J."/>
            <person name="Mohammed S."/>
        </authorList>
    </citation>
    <scope>PHOSPHORYLATION [LARGE SCALE ANALYSIS] AT SER-1172</scope>
    <scope>IDENTIFICATION BY MASS SPECTROMETRY [LARGE SCALE ANALYSIS]</scope>
    <source>
        <tissue>Cervix carcinoma</tissue>
        <tissue>Erythroleukemia</tissue>
    </source>
</reference>
<reference key="18">
    <citation type="journal article" date="2021" name="Am. J. Hum. Genet.">
        <title>Truncating SRCAP variants outside the Floating-Harbor syndrome locus cause a distinct neurodevelopmental disorder with a specific DNA methylation signature.</title>
        <authorList>
            <person name="Rots D."/>
            <person name="Chater-Diehl E."/>
            <person name="Dingemans A.J.M."/>
            <person name="Goodman S.J."/>
            <person name="Siu M.T."/>
            <person name="Cytrynbaum C."/>
            <person name="Choufani S."/>
            <person name="Hoang N."/>
            <person name="Walker S."/>
            <person name="Awamleh Z."/>
            <person name="Charkow J."/>
            <person name="Meyn S."/>
            <person name="Pfundt R."/>
            <person name="Rinne T."/>
            <person name="Gardeitchik T."/>
            <person name="de Vries B.B.A."/>
            <person name="Deden A.C."/>
            <person name="Leenders E."/>
            <person name="Kwint M."/>
            <person name="Stumpel C.T.R.M."/>
            <person name="Stevens S.J.C."/>
            <person name="Vermeulen J.R."/>
            <person name="van Harssel J.V.T."/>
            <person name="Bosch D.G.M."/>
            <person name="van Gassen K.L.I."/>
            <person name="van Binsbergen E."/>
            <person name="de Geus C.M."/>
            <person name="Brackel H."/>
            <person name="Hempel M."/>
            <person name="Lessel D."/>
            <person name="Denecke J."/>
            <person name="Slavotinek A."/>
            <person name="Strober J."/>
            <person name="Crunk A."/>
            <person name="Folk L."/>
            <person name="Wentzensen I.M."/>
            <person name="Yang H."/>
            <person name="Zou F."/>
            <person name="Millan F."/>
            <person name="Person R."/>
            <person name="Xie Y."/>
            <person name="Liu S."/>
            <person name="Ousager L.B."/>
            <person name="Larsen M."/>
            <person name="Schultz-Rogers L."/>
            <person name="Morava E."/>
            <person name="Klee E.W."/>
            <person name="Berry I.R."/>
            <person name="Campbell J."/>
            <person name="Lindstrom K."/>
            <person name="Pruniski B."/>
            <person name="Neumeyer A.M."/>
            <person name="Radley J.A."/>
            <person name="Phornphutkul C."/>
            <person name="Schmidt B."/>
            <person name="Wilson W.G."/>
            <person name="Ounap K."/>
            <person name="Reinson K."/>
            <person name="Pajusalu S."/>
            <person name="van Haeringen A."/>
            <person name="Ruivenkamp C."/>
            <person name="Cuperus R."/>
            <person name="Santos-Simarro F."/>
            <person name="Palomares-Bralo M."/>
            <person name="Pacio-Miguez M."/>
            <person name="Ritter A."/>
            <person name="Bhoj E."/>
            <person name="Toenne E."/>
            <person name="Tveten K."/>
            <person name="Cappuccio G."/>
            <person name="Brunetti-Pierri N."/>
            <person name="Rowe L."/>
            <person name="Bunn J."/>
            <person name="Saenz M."/>
            <person name="Platzer K."/>
            <person name="Mertens M."/>
            <person name="Caluseriu O."/>
            <person name="Nowaczyk M.J.M."/>
            <person name="Cohn R.D."/>
            <person name="Kannu P."/>
            <person name="Alkhunaizi E."/>
            <person name="Chitayat D."/>
            <person name="Scherer S.W."/>
            <person name="Brunner H.G."/>
            <person name="Vissers L.E.L.M."/>
            <person name="Kleefstra T."/>
            <person name="Koolen D.A."/>
            <person name="Weksberg R."/>
        </authorList>
    </citation>
    <scope>VARIANTS DEHMBA 392-GLN--THR-3230 DEL; 840-ARG--THR-3230 DEL; 1278-SER--THR-3230 DEL; 1642-LEU--THR-3230 DEL AND 2070-ARG--THR-3230 DEL</scope>
    <scope>INVOLVEMENT IN DEHMBA</scope>
</reference>
<comment type="function">
    <text evidence="5 7 9 12 13 14">Catalytic component of the SRCAP complex which mediates the ATP-dependent exchange of histone H2AZ/H2B dimers for nucleosomal H2A/H2B, leading to transcriptional regulation of selected genes by chromatin remodeling. Acts as a coactivator for CREB-mediated transcription, steroid receptor-mediated transcription, and Notch-mediated transcription.</text>
</comment>
<comment type="biophysicochemical properties">
    <kinetics>
        <KM evidence="5">66 uM for ATP</KM>
    </kinetics>
</comment>
<comment type="subunit">
    <text evidence="5 8 9 10 11 13">Interacts with CREBBP and EP300. May be part of a complex containing SRCAP, CREBBP, CARM1 and GRIP1. Component of the chromatin-remodeling SRCAP complex composed of at least SRCAP, DMAP1, RUVBL1, RUVBL2, ACTL6A, YEATS4, VPS72, ACTR6 and ZNHIT1. Component of a NuA4-related complex which contains EP400, TRRAP/PAF400, SRCAP, BRD8/SMAP, EPC1, DMAP1/DNMAP1, RUVBL1/TIP49, RUVBL2, actin, ACTL6A/BAF53A, VPS72 and YEATS4/GAS41.</text>
</comment>
<comment type="subunit">
    <text evidence="6">(Microbial infection) Interacts with hepatitis C virus (HCV) NS5A.</text>
</comment>
<comment type="subunit">
    <text evidence="8">(Microbial infection) Interacts with human adenovirus 2 DBP.</text>
</comment>
<comment type="interaction">
    <interactant intactId="EBI-12029182">
        <id>Q6ZRS2-3</id>
    </interactant>
    <interactant intactId="EBI-17183751">
        <id>X5D778</id>
        <label>ANKRD11</label>
    </interactant>
    <organismsDiffer>false</organismsDiffer>
    <experiments>3</experiments>
</comment>
<comment type="interaction">
    <interactant intactId="EBI-12029182">
        <id>Q6ZRS2-3</id>
    </interactant>
    <interactant intactId="EBI-395261">
        <id>P24863</id>
        <label>CCNC</label>
    </interactant>
    <organismsDiffer>false</organismsDiffer>
    <experiments>3</experiments>
</comment>
<comment type="interaction">
    <interactant intactId="EBI-12029182">
        <id>Q6ZRS2-3</id>
    </interactant>
    <interactant intactId="EBI-739624">
        <id>Q8NHQ1</id>
        <label>CEP70</label>
    </interactant>
    <organismsDiffer>false</organismsDiffer>
    <experiments>3</experiments>
</comment>
<comment type="interaction">
    <interactant intactId="EBI-12029182">
        <id>Q6ZRS2-3</id>
    </interactant>
    <interactant intactId="EBI-11519926">
        <id>Q6PI77</id>
        <label>GPRASP3</label>
    </interactant>
    <organismsDiffer>false</organismsDiffer>
    <experiments>3</experiments>
</comment>
<comment type="interaction">
    <interactant intactId="EBI-12029182">
        <id>Q6ZRS2-3</id>
    </interactant>
    <interactant intactId="EBI-394644">
        <id>Q9H944</id>
        <label>MED20</label>
    </interactant>
    <organismsDiffer>false</organismsDiffer>
    <experiments>3</experiments>
</comment>
<comment type="interaction">
    <interactant intactId="EBI-12029182">
        <id>Q6ZRS2-3</id>
    </interactant>
    <interactant intactId="EBI-2548751">
        <id>Q8TD10</id>
        <label>MIPOL1</label>
    </interactant>
    <organismsDiffer>false</organismsDiffer>
    <experiments>3</experiments>
</comment>
<comment type="interaction">
    <interactant intactId="EBI-12029182">
        <id>Q6ZRS2-3</id>
    </interactant>
    <interactant intactId="EBI-1047946">
        <id>P26045</id>
        <label>PTPN3</label>
    </interactant>
    <organismsDiffer>false</organismsDiffer>
    <experiments>3</experiments>
</comment>
<comment type="interaction">
    <interactant intactId="EBI-12029182">
        <id>Q6ZRS2-3</id>
    </interactant>
    <interactant intactId="EBI-748621">
        <id>Q9UJW9</id>
        <label>SERTAD3</label>
    </interactant>
    <organismsDiffer>false</organismsDiffer>
    <experiments>3</experiments>
</comment>
<comment type="interaction">
    <interactant intactId="EBI-12029182">
        <id>Q6ZRS2-3</id>
    </interactant>
    <interactant intactId="EBI-2130429">
        <id>Q9BYV2</id>
        <label>TRIM54</label>
    </interactant>
    <organismsDiffer>false</organismsDiffer>
    <experiments>3</experiments>
</comment>
<comment type="interaction">
    <interactant intactId="EBI-12029182">
        <id>Q6ZRS2-3</id>
    </interactant>
    <interactant intactId="EBI-739895">
        <id>Q8N6Y0</id>
        <label>USHBP1</label>
    </interactant>
    <organismsDiffer>false</organismsDiffer>
    <experiments>3</experiments>
</comment>
<comment type="subcellular location">
    <subcellularLocation>
        <location evidence="3 6">Nucleus</location>
    </subcellularLocation>
</comment>
<comment type="alternative products">
    <event type="alternative splicing"/>
    <isoform>
        <id>Q6ZRS2-1</id>
        <name>1</name>
        <sequence type="displayed"/>
    </isoform>
    <isoform>
        <id>Q6ZRS2-2</id>
        <name>2</name>
        <sequence type="described" ref="VSP_029442"/>
    </isoform>
    <isoform>
        <id>Q6ZRS2-3</id>
        <name>3</name>
        <sequence type="described" ref="VSP_029441 VSP_029442"/>
    </isoform>
</comment>
<comment type="disease" evidence="15">
    <disease id="DI-03389">
        <name>Floating-Harbor syndrome</name>
        <acronym>FLHS</acronym>
        <description>A rare genetic disorder characterized by proportionate short stature, delayed bone age, delayed speech development, and typical facial features. The face is triangular with deep-set eyes, long eyelashes, bulbous nose, wide columella, short philtrum, and thin lips.</description>
        <dbReference type="MIM" id="136140"/>
    </disease>
    <text>The disease is caused by variants affecting the gene represented in this entry.</text>
</comment>
<comment type="disease" evidence="16">
    <disease id="DI-06262">
        <name>Developmental delay, hypotonia, musculoskeletal defects, and behavioral abnormalities</name>
        <acronym>DEHMBA</acronym>
        <description>An autosomal dominant disorder characterized by developmental delay, speech delay, mild to severe intellectual disability, hypotonia, musculoskeletal features, and behavioral abnormalities including autistic features. Skeletal anomalies include joint hypermobility, chronic musculoskeletal pain, scoliosis, and pectus defects. Affected individuals also have non-specific and variable dysmorphic facial features.</description>
        <dbReference type="MIM" id="619595"/>
    </disease>
    <text>The disease is caused by variants affecting the gene represented in this entry.</text>
</comment>
<comment type="similarity">
    <text evidence="20">Belongs to the SNF2/RAD54 helicase family. SWR1 subfamily.</text>
</comment>
<comment type="sequence caution" evidence="20">
    <conflict type="erroneous initiation">
        <sequence resource="EMBL-CDS" id="AAI59100"/>
    </conflict>
    <text>Truncated N-terminus.</text>
</comment>
<feature type="chain" id="PRO_0000311236" description="Helicase SRCAP">
    <location>
        <begin position="1"/>
        <end position="3230"/>
    </location>
</feature>
<feature type="domain" description="HSA" evidence="3">
    <location>
        <begin position="124"/>
        <end position="196"/>
    </location>
</feature>
<feature type="domain" description="Helicase ATP-binding" evidence="1">
    <location>
        <begin position="630"/>
        <end position="795"/>
    </location>
</feature>
<feature type="domain" description="Helicase C-terminal" evidence="2">
    <location>
        <begin position="2044"/>
        <end position="2197"/>
    </location>
</feature>
<feature type="DNA-binding region" description="A.T hook 1">
    <location>
        <begin position="2857"/>
        <end position="2869"/>
    </location>
</feature>
<feature type="DNA-binding region" description="A.T hook 2">
    <location>
        <begin position="2936"/>
        <end position="2948"/>
    </location>
</feature>
<feature type="DNA-binding region" description="A.T hook 3">
    <location>
        <begin position="3004"/>
        <end position="3016"/>
    </location>
</feature>
<feature type="region of interest" description="Disordered" evidence="4">
    <location>
        <begin position="1"/>
        <end position="71"/>
    </location>
</feature>
<feature type="region of interest" description="Disordered" evidence="4">
    <location>
        <begin position="253"/>
        <end position="547"/>
    </location>
</feature>
<feature type="region of interest" description="Disordered" evidence="4">
    <location>
        <begin position="559"/>
        <end position="581"/>
    </location>
</feature>
<feature type="region of interest" description="Disordered" evidence="4">
    <location>
        <begin position="1017"/>
        <end position="1045"/>
    </location>
</feature>
<feature type="region of interest" description="Disordered" evidence="4">
    <location>
        <begin position="1058"/>
        <end position="1125"/>
    </location>
</feature>
<feature type="region of interest" description="Disordered" evidence="4">
    <location>
        <begin position="1138"/>
        <end position="1166"/>
    </location>
</feature>
<feature type="region of interest" description="Disordered" evidence="4">
    <location>
        <begin position="1320"/>
        <end position="1366"/>
    </location>
</feature>
<feature type="region of interest" description="Disordered" evidence="4">
    <location>
        <begin position="1406"/>
        <end position="1425"/>
    </location>
</feature>
<feature type="region of interest" description="Disordered" evidence="4">
    <location>
        <begin position="1629"/>
        <end position="1760"/>
    </location>
</feature>
<feature type="region of interest" description="Disordered" evidence="4">
    <location>
        <begin position="1839"/>
        <end position="1893"/>
    </location>
</feature>
<feature type="region of interest" description="Disordered" evidence="4">
    <location>
        <begin position="2214"/>
        <end position="2233"/>
    </location>
</feature>
<feature type="region of interest" description="Disordered" evidence="4">
    <location>
        <begin position="2271"/>
        <end position="2298"/>
    </location>
</feature>
<feature type="region of interest" description="Disordered" evidence="4">
    <location>
        <begin position="2327"/>
        <end position="2453"/>
    </location>
</feature>
<feature type="region of interest" description="Disordered" evidence="4">
    <location>
        <begin position="2564"/>
        <end position="2583"/>
    </location>
</feature>
<feature type="region of interest" description="Disordered" evidence="4">
    <location>
        <begin position="2598"/>
        <end position="3081"/>
    </location>
</feature>
<feature type="region of interest" description="Disordered" evidence="4">
    <location>
        <begin position="3095"/>
        <end position="3230"/>
    </location>
</feature>
<feature type="compositionally biased region" description="Low complexity" evidence="4">
    <location>
        <begin position="26"/>
        <end position="41"/>
    </location>
</feature>
<feature type="compositionally biased region" description="Low complexity" evidence="4">
    <location>
        <begin position="257"/>
        <end position="273"/>
    </location>
</feature>
<feature type="compositionally biased region" description="Acidic residues" evidence="4">
    <location>
        <begin position="283"/>
        <end position="313"/>
    </location>
</feature>
<feature type="compositionally biased region" description="Basic and acidic residues" evidence="4">
    <location>
        <begin position="315"/>
        <end position="329"/>
    </location>
</feature>
<feature type="compositionally biased region" description="Low complexity" evidence="4">
    <location>
        <begin position="337"/>
        <end position="356"/>
    </location>
</feature>
<feature type="compositionally biased region" description="Acidic residues" evidence="4">
    <location>
        <begin position="397"/>
        <end position="425"/>
    </location>
</feature>
<feature type="compositionally biased region" description="Basic and acidic residues" evidence="4">
    <location>
        <begin position="426"/>
        <end position="441"/>
    </location>
</feature>
<feature type="compositionally biased region" description="Acidic residues" evidence="4">
    <location>
        <begin position="462"/>
        <end position="490"/>
    </location>
</feature>
<feature type="compositionally biased region" description="Acidic residues" evidence="4">
    <location>
        <begin position="503"/>
        <end position="517"/>
    </location>
</feature>
<feature type="compositionally biased region" description="Acidic residues" evidence="4">
    <location>
        <begin position="524"/>
        <end position="533"/>
    </location>
</feature>
<feature type="compositionally biased region" description="Pro residues" evidence="4">
    <location>
        <begin position="1018"/>
        <end position="1030"/>
    </location>
</feature>
<feature type="compositionally biased region" description="Pro residues" evidence="4">
    <location>
        <begin position="1058"/>
        <end position="1076"/>
    </location>
</feature>
<feature type="compositionally biased region" description="Low complexity" evidence="4">
    <location>
        <begin position="1093"/>
        <end position="1107"/>
    </location>
</feature>
<feature type="compositionally biased region" description="Pro residues" evidence="4">
    <location>
        <begin position="1108"/>
        <end position="1123"/>
    </location>
</feature>
<feature type="compositionally biased region" description="Low complexity" evidence="4">
    <location>
        <begin position="1138"/>
        <end position="1160"/>
    </location>
</feature>
<feature type="compositionally biased region" description="Pro residues" evidence="4">
    <location>
        <begin position="1323"/>
        <end position="1336"/>
    </location>
</feature>
<feature type="compositionally biased region" description="Low complexity" evidence="4">
    <location>
        <begin position="1337"/>
        <end position="1360"/>
    </location>
</feature>
<feature type="compositionally biased region" description="Low complexity" evidence="4">
    <location>
        <begin position="1675"/>
        <end position="1691"/>
    </location>
</feature>
<feature type="compositionally biased region" description="Polar residues" evidence="4">
    <location>
        <begin position="1692"/>
        <end position="1733"/>
    </location>
</feature>
<feature type="compositionally biased region" description="Pro residues" evidence="4">
    <location>
        <begin position="1750"/>
        <end position="1760"/>
    </location>
</feature>
<feature type="compositionally biased region" description="Low complexity" evidence="4">
    <location>
        <begin position="2215"/>
        <end position="2225"/>
    </location>
</feature>
<feature type="compositionally biased region" description="Basic and acidic residues" evidence="4">
    <location>
        <begin position="2284"/>
        <end position="2298"/>
    </location>
</feature>
<feature type="compositionally biased region" description="Basic and acidic residues" evidence="4">
    <location>
        <begin position="2327"/>
        <end position="2358"/>
    </location>
</feature>
<feature type="compositionally biased region" description="Basic and acidic residues" evidence="4">
    <location>
        <begin position="2386"/>
        <end position="2403"/>
    </location>
</feature>
<feature type="compositionally biased region" description="Pro residues" evidence="4">
    <location>
        <begin position="2438"/>
        <end position="2448"/>
    </location>
</feature>
<feature type="compositionally biased region" description="Low complexity" evidence="4">
    <location>
        <begin position="2564"/>
        <end position="2579"/>
    </location>
</feature>
<feature type="compositionally biased region" description="Low complexity" evidence="4">
    <location>
        <begin position="2600"/>
        <end position="2611"/>
    </location>
</feature>
<feature type="compositionally biased region" description="Basic and acidic residues" evidence="4">
    <location>
        <begin position="2669"/>
        <end position="2679"/>
    </location>
</feature>
<feature type="compositionally biased region" description="Low complexity" evidence="4">
    <location>
        <begin position="2694"/>
        <end position="2712"/>
    </location>
</feature>
<feature type="compositionally biased region" description="Polar residues" evidence="4">
    <location>
        <begin position="2782"/>
        <end position="2794"/>
    </location>
</feature>
<feature type="compositionally biased region" description="Low complexity" evidence="4">
    <location>
        <begin position="2807"/>
        <end position="2817"/>
    </location>
</feature>
<feature type="compositionally biased region" description="Basic residues" evidence="4">
    <location>
        <begin position="2856"/>
        <end position="2868"/>
    </location>
</feature>
<feature type="compositionally biased region" description="Pro residues" evidence="4">
    <location>
        <begin position="2913"/>
        <end position="2926"/>
    </location>
</feature>
<feature type="compositionally biased region" description="Polar residues" evidence="4">
    <location>
        <begin position="2953"/>
        <end position="2965"/>
    </location>
</feature>
<feature type="compositionally biased region" description="Pro residues" evidence="4">
    <location>
        <begin position="2967"/>
        <end position="2982"/>
    </location>
</feature>
<feature type="compositionally biased region" description="Low complexity" evidence="4">
    <location>
        <begin position="2983"/>
        <end position="3002"/>
    </location>
</feature>
<feature type="compositionally biased region" description="Pro residues" evidence="4">
    <location>
        <begin position="3011"/>
        <end position="3020"/>
    </location>
</feature>
<feature type="compositionally biased region" description="Low complexity" evidence="4">
    <location>
        <begin position="3044"/>
        <end position="3053"/>
    </location>
</feature>
<feature type="compositionally biased region" description="Acidic residues" evidence="4">
    <location>
        <begin position="3168"/>
        <end position="3184"/>
    </location>
</feature>
<feature type="binding site" evidence="1">
    <location>
        <begin position="643"/>
        <end position="650"/>
    </location>
    <ligand>
        <name>ATP</name>
        <dbReference type="ChEBI" id="CHEBI:30616"/>
    </ligand>
</feature>
<feature type="modified residue" description="Phosphoserine" evidence="21">
    <location>
        <position position="1172"/>
    </location>
</feature>
<feature type="splice variant" id="VSP_029441" description="In isoform 3." evidence="18 19">
    <original>VLPSPLGVLSGTSRPPTPTLSLKPTPPAPVRLSPAPPPGSSSLLKPLTVPPGYTFPPAAATTTSTTTATATTTAVPAPTPAPQRLILSPDMQARLPS</original>
    <variation>A</variation>
    <location>
        <begin position="1085"/>
        <end position="1181"/>
    </location>
</feature>
<feature type="splice variant" id="VSP_029442" description="In isoform 2 and isoform 3." evidence="17 18 19">
    <original>RNVVHLVSAGGQHHLISQPAHVALIQAVAPTPGPTPVSVLPSSTPSTTPAPTGLSLPLAANQV</original>
    <variation>M</variation>
    <location>
        <begin position="1236"/>
        <end position="1298"/>
    </location>
</feature>
<feature type="sequence variant" id="VAR_086403" description="In DEHMBA." evidence="16">
    <location>
        <begin position="392"/>
        <end position="3230"/>
    </location>
</feature>
<feature type="sequence variant" id="VAR_086404" description="In DEHMBA." evidence="16">
    <location>
        <begin position="840"/>
        <end position="3230"/>
    </location>
</feature>
<feature type="sequence variant" id="VAR_086405" description="In DEHMBA." evidence="16">
    <location>
        <begin position="1278"/>
        <end position="3230"/>
    </location>
</feature>
<feature type="sequence variant" id="VAR_086406" description="In DEHMBA." evidence="16">
    <location>
        <begin position="1642"/>
        <end position="3230"/>
    </location>
</feature>
<feature type="sequence variant" id="VAR_086407" description="In DEHMBA." evidence="16">
    <location>
        <begin position="2070"/>
        <end position="3230"/>
    </location>
</feature>
<feature type="sequence variant" id="VAR_086408" description="In FLHS." evidence="15">
    <location>
        <begin position="2435"/>
        <end position="3230"/>
    </location>
</feature>
<feature type="sequence variant" id="VAR_086409" description="In FLHS." evidence="15">
    <location>
        <begin position="2444"/>
        <end position="3230"/>
    </location>
</feature>
<feature type="sequence conflict" description="In Ref. 2; BAC87237." evidence="20" ref="2">
    <original>T</original>
    <variation>A</variation>
    <location>
        <position position="1147"/>
    </location>
</feature>
<feature type="sequence conflict" description="In Ref. 6; AAD39760." evidence="20" ref="6">
    <original>A</original>
    <variation>Q</variation>
    <location>
        <position position="1494"/>
    </location>
</feature>
<feature type="sequence conflict" description="In Ref. 6; AAD39760." evidence="20" ref="6">
    <original>R</original>
    <variation>Q</variation>
    <location>
        <position position="2765"/>
    </location>
</feature>
<protein>
    <recommendedName>
        <fullName>Helicase SRCAP</fullName>
        <ecNumber>3.6.4.-</ecNumber>
    </recommendedName>
    <alternativeName>
        <fullName>Domino homolog 2</fullName>
    </alternativeName>
    <alternativeName>
        <fullName>Snf2-related CBP activator</fullName>
    </alternativeName>
</protein>
<keyword id="KW-0002">3D-structure</keyword>
<keyword id="KW-0010">Activator</keyword>
<keyword id="KW-0025">Alternative splicing</keyword>
<keyword id="KW-0067">ATP-binding</keyword>
<keyword id="KW-0156">Chromatin regulator</keyword>
<keyword id="KW-0225">Disease variant</keyword>
<keyword id="KW-0238">DNA-binding</keyword>
<keyword id="KW-0347">Helicase</keyword>
<keyword id="KW-0945">Host-virus interaction</keyword>
<keyword id="KW-0378">Hydrolase</keyword>
<keyword id="KW-0991">Intellectual disability</keyword>
<keyword id="KW-0547">Nucleotide-binding</keyword>
<keyword id="KW-0539">Nucleus</keyword>
<keyword id="KW-0597">Phosphoprotein</keyword>
<keyword id="KW-1267">Proteomics identification</keyword>
<keyword id="KW-1185">Reference proteome</keyword>
<keyword id="KW-0677">Repeat</keyword>
<keyword id="KW-0804">Transcription</keyword>
<keyword id="KW-0805">Transcription regulation</keyword>
<dbReference type="EC" id="3.6.4.-"/>
<dbReference type="EMBL" id="AC093249">
    <property type="status" value="NOT_ANNOTATED_CDS"/>
    <property type="molecule type" value="Genomic_DNA"/>
</dbReference>
<dbReference type="EMBL" id="AC106886">
    <property type="status" value="NOT_ANNOTATED_CDS"/>
    <property type="molecule type" value="Genomic_DNA"/>
</dbReference>
<dbReference type="EMBL" id="AK128030">
    <property type="protein sequence ID" value="BAC87237.1"/>
    <property type="molecule type" value="mRNA"/>
</dbReference>
<dbReference type="EMBL" id="AB002307">
    <property type="protein sequence ID" value="BAA20768.2"/>
    <property type="molecule type" value="mRNA"/>
</dbReference>
<dbReference type="EMBL" id="BC159099">
    <property type="protein sequence ID" value="AAI59100.1"/>
    <property type="status" value="ALT_INIT"/>
    <property type="molecule type" value="mRNA"/>
</dbReference>
<dbReference type="EMBL" id="AF143946">
    <property type="protein sequence ID" value="AAD39760.1"/>
    <property type="molecule type" value="mRNA"/>
</dbReference>
<dbReference type="CCDS" id="CCDS10689.2">
    <molecule id="Q6ZRS2-1"/>
</dbReference>
<dbReference type="RefSeq" id="NP_006653.2">
    <molecule id="Q6ZRS2-1"/>
    <property type="nucleotide sequence ID" value="NM_006662.3"/>
</dbReference>
<dbReference type="PDB" id="6IGM">
    <property type="method" value="EM"/>
    <property type="resolution" value="4.00 A"/>
    <property type="chains" value="H=1-3230"/>
</dbReference>
<dbReference type="PDB" id="8X15">
    <property type="method" value="EM"/>
    <property type="resolution" value="3.20 A"/>
    <property type="chains" value="I=1-3230"/>
</dbReference>
<dbReference type="PDB" id="8X19">
    <property type="method" value="EM"/>
    <property type="resolution" value="3.20 A"/>
    <property type="chains" value="I=1-3230"/>
</dbReference>
<dbReference type="PDB" id="8X1C">
    <property type="method" value="EM"/>
    <property type="resolution" value="3.20 A"/>
    <property type="chains" value="I=1-3230"/>
</dbReference>
<dbReference type="PDBsum" id="6IGM"/>
<dbReference type="PDBsum" id="8X15"/>
<dbReference type="PDBsum" id="8X19"/>
<dbReference type="PDBsum" id="8X1C"/>
<dbReference type="EMDB" id="EMD-37984"/>
<dbReference type="EMDB" id="EMD-37988"/>
<dbReference type="EMDB" id="EMD-37990"/>
<dbReference type="EMDB" id="EMD-9668"/>
<dbReference type="SMR" id="Q6ZRS2"/>
<dbReference type="BioGRID" id="116058">
    <property type="interactions" value="148"/>
</dbReference>
<dbReference type="ComplexPortal" id="CPX-974">
    <property type="entry name" value="SRCAP chromatin remodeling complex"/>
</dbReference>
<dbReference type="CORUM" id="Q6ZRS2"/>
<dbReference type="DIP" id="DIP-45191N"/>
<dbReference type="FunCoup" id="Q6ZRS2">
    <property type="interactions" value="2465"/>
</dbReference>
<dbReference type="IntAct" id="Q6ZRS2">
    <property type="interactions" value="90"/>
</dbReference>
<dbReference type="MINT" id="Q6ZRS2"/>
<dbReference type="STRING" id="9606.ENSP00000262518"/>
<dbReference type="GlyCosmos" id="Q6ZRS2">
    <property type="glycosylation" value="12 sites, 2 glycans"/>
</dbReference>
<dbReference type="GlyGen" id="Q6ZRS2">
    <property type="glycosylation" value="27 sites, 1 N-linked glycan (1 site), 3 O-linked glycans (12 sites)"/>
</dbReference>
<dbReference type="iPTMnet" id="Q6ZRS2"/>
<dbReference type="PhosphoSitePlus" id="Q6ZRS2"/>
<dbReference type="SwissPalm" id="Q6ZRS2"/>
<dbReference type="BioMuta" id="SRCAP"/>
<dbReference type="DMDM" id="296452947"/>
<dbReference type="jPOST" id="Q6ZRS2"/>
<dbReference type="MassIVE" id="Q6ZRS2"/>
<dbReference type="PaxDb" id="9606-ENSP00000262518"/>
<dbReference type="PeptideAtlas" id="Q6ZRS2"/>
<dbReference type="ProteomicsDB" id="68161">
    <molecule id="Q6ZRS2-1"/>
</dbReference>
<dbReference type="ProteomicsDB" id="68162">
    <molecule id="Q6ZRS2-2"/>
</dbReference>
<dbReference type="ProteomicsDB" id="68163">
    <molecule id="Q6ZRS2-3"/>
</dbReference>
<dbReference type="Pumba" id="Q6ZRS2"/>
<dbReference type="Antibodypedia" id="27413">
    <property type="antibodies" value="81 antibodies from 22 providers"/>
</dbReference>
<dbReference type="DNASU" id="10847"/>
<dbReference type="Ensembl" id="ENST00000262518.9">
    <molecule id="Q6ZRS2-1"/>
    <property type="protein sequence ID" value="ENSP00000262518.4"/>
    <property type="gene ID" value="ENSG00000080603.17"/>
</dbReference>
<dbReference type="Ensembl" id="ENST00000411466.7">
    <molecule id="Q6ZRS2-1"/>
    <property type="protein sequence ID" value="ENSP00000405186.3"/>
    <property type="gene ID" value="ENSG00000080603.17"/>
</dbReference>
<dbReference type="Ensembl" id="ENST00000706321.1">
    <molecule id="Q6ZRS2-1"/>
    <property type="protein sequence ID" value="ENSP00000516346.1"/>
    <property type="gene ID" value="ENSG00000080603.17"/>
</dbReference>
<dbReference type="GeneID" id="10847"/>
<dbReference type="KEGG" id="hsa:10847"/>
<dbReference type="MANE-Select" id="ENST00000262518.9">
    <property type="protein sequence ID" value="ENSP00000262518.4"/>
    <property type="RefSeq nucleotide sequence ID" value="NM_006662.3"/>
    <property type="RefSeq protein sequence ID" value="NP_006653.2"/>
</dbReference>
<dbReference type="UCSC" id="uc002dze.2">
    <molecule id="Q6ZRS2-1"/>
    <property type="organism name" value="human"/>
</dbReference>
<dbReference type="AGR" id="HGNC:16974"/>
<dbReference type="CTD" id="10847"/>
<dbReference type="DisGeNET" id="10847"/>
<dbReference type="GeneCards" id="SRCAP"/>
<dbReference type="GeneReviews" id="SRCAP"/>
<dbReference type="HGNC" id="HGNC:16974">
    <property type="gene designation" value="SRCAP"/>
</dbReference>
<dbReference type="HPA" id="ENSG00000080603">
    <property type="expression patterns" value="Low tissue specificity"/>
</dbReference>
<dbReference type="MalaCards" id="SRCAP"/>
<dbReference type="MIM" id="136140">
    <property type="type" value="phenotype"/>
</dbReference>
<dbReference type="MIM" id="611421">
    <property type="type" value="gene"/>
</dbReference>
<dbReference type="MIM" id="619595">
    <property type="type" value="phenotype"/>
</dbReference>
<dbReference type="neXtProt" id="NX_Q6ZRS2"/>
<dbReference type="OpenTargets" id="ENSG00000080603"/>
<dbReference type="Orphanet" id="2044">
    <property type="disease" value="Floating-Harbor syndrome"/>
</dbReference>
<dbReference type="Orphanet" id="528084">
    <property type="disease" value="Non-specific syndromic intellectual disability"/>
</dbReference>
<dbReference type="PharmGKB" id="PA162404706"/>
<dbReference type="VEuPathDB" id="HostDB:ENSG00000080603"/>
<dbReference type="eggNOG" id="KOG0391">
    <property type="taxonomic scope" value="Eukaryota"/>
</dbReference>
<dbReference type="GeneTree" id="ENSGT00940000157457"/>
<dbReference type="HOGENOM" id="CLU_000315_12_2_1"/>
<dbReference type="InParanoid" id="Q6ZRS2"/>
<dbReference type="OMA" id="WTFTEAA"/>
<dbReference type="OrthoDB" id="372624at2759"/>
<dbReference type="PAN-GO" id="Q6ZRS2">
    <property type="GO annotations" value="4 GO annotations based on evolutionary models"/>
</dbReference>
<dbReference type="PhylomeDB" id="Q6ZRS2"/>
<dbReference type="TreeFam" id="TF106424"/>
<dbReference type="PathwayCommons" id="Q6ZRS2"/>
<dbReference type="SABIO-RK" id="Q6ZRS2"/>
<dbReference type="SignaLink" id="Q6ZRS2"/>
<dbReference type="SIGNOR" id="Q6ZRS2"/>
<dbReference type="BioGRID-ORCS" id="10847">
    <property type="hits" value="730 hits in 1194 CRISPR screens"/>
</dbReference>
<dbReference type="ChiTaRS" id="SRCAP">
    <property type="organism name" value="human"/>
</dbReference>
<dbReference type="GeneWiki" id="SRCAP"/>
<dbReference type="GenomeRNAi" id="10847"/>
<dbReference type="Pharos" id="Q6ZRS2">
    <property type="development level" value="Tbio"/>
</dbReference>
<dbReference type="PRO" id="PR:Q6ZRS2"/>
<dbReference type="Proteomes" id="UP000005640">
    <property type="component" value="Chromosome 16"/>
</dbReference>
<dbReference type="RNAct" id="Q6ZRS2">
    <property type="molecule type" value="protein"/>
</dbReference>
<dbReference type="Bgee" id="ENSG00000080603">
    <property type="expression patterns" value="Expressed in sural nerve and 97 other cell types or tissues"/>
</dbReference>
<dbReference type="ExpressionAtlas" id="Q6ZRS2">
    <property type="expression patterns" value="baseline and differential"/>
</dbReference>
<dbReference type="GO" id="GO:0005794">
    <property type="term" value="C:Golgi apparatus"/>
    <property type="evidence" value="ECO:0000314"/>
    <property type="project" value="HPA"/>
</dbReference>
<dbReference type="GO" id="GO:0016604">
    <property type="term" value="C:nuclear body"/>
    <property type="evidence" value="ECO:0000314"/>
    <property type="project" value="HPA"/>
</dbReference>
<dbReference type="GO" id="GO:0005654">
    <property type="term" value="C:nucleoplasm"/>
    <property type="evidence" value="ECO:0000314"/>
    <property type="project" value="HPA"/>
</dbReference>
<dbReference type="GO" id="GO:0000786">
    <property type="term" value="C:nucleosome"/>
    <property type="evidence" value="ECO:0000303"/>
    <property type="project" value="ComplexPortal"/>
</dbReference>
<dbReference type="GO" id="GO:0005634">
    <property type="term" value="C:nucleus"/>
    <property type="evidence" value="ECO:0000314"/>
    <property type="project" value="AgBase"/>
</dbReference>
<dbReference type="GO" id="GO:0048471">
    <property type="term" value="C:perinuclear region of cytoplasm"/>
    <property type="evidence" value="ECO:0000314"/>
    <property type="project" value="AgBase"/>
</dbReference>
<dbReference type="GO" id="GO:0032991">
    <property type="term" value="C:protein-containing complex"/>
    <property type="evidence" value="ECO:0000314"/>
    <property type="project" value="UniProtKB"/>
</dbReference>
<dbReference type="GO" id="GO:0000812">
    <property type="term" value="C:Swr1 complex"/>
    <property type="evidence" value="ECO:0000318"/>
    <property type="project" value="GO_Central"/>
</dbReference>
<dbReference type="GO" id="GO:0005524">
    <property type="term" value="F:ATP binding"/>
    <property type="evidence" value="ECO:0007669"/>
    <property type="project" value="UniProtKB-KW"/>
</dbReference>
<dbReference type="GO" id="GO:0016887">
    <property type="term" value="F:ATP hydrolysis activity"/>
    <property type="evidence" value="ECO:0000318"/>
    <property type="project" value="GO_Central"/>
</dbReference>
<dbReference type="GO" id="GO:0003677">
    <property type="term" value="F:DNA binding"/>
    <property type="evidence" value="ECO:0007669"/>
    <property type="project" value="UniProtKB-KW"/>
</dbReference>
<dbReference type="GO" id="GO:0004386">
    <property type="term" value="F:helicase activity"/>
    <property type="evidence" value="ECO:0007669"/>
    <property type="project" value="UniProtKB-KW"/>
</dbReference>
<dbReference type="GO" id="GO:0004402">
    <property type="term" value="F:histone acetyltransferase activity"/>
    <property type="evidence" value="ECO:0000304"/>
    <property type="project" value="ProtInc"/>
</dbReference>
<dbReference type="GO" id="GO:0042393">
    <property type="term" value="F:histone binding"/>
    <property type="evidence" value="ECO:0000318"/>
    <property type="project" value="GO_Central"/>
</dbReference>
<dbReference type="GO" id="GO:0003713">
    <property type="term" value="F:transcription coactivator activity"/>
    <property type="evidence" value="ECO:0000304"/>
    <property type="project" value="ProtInc"/>
</dbReference>
<dbReference type="GO" id="GO:0006338">
    <property type="term" value="P:chromatin remodeling"/>
    <property type="evidence" value="ECO:0000318"/>
    <property type="project" value="GO_Central"/>
</dbReference>
<dbReference type="GO" id="GO:0006355">
    <property type="term" value="P:regulation of DNA-templated transcription"/>
    <property type="evidence" value="ECO:0000303"/>
    <property type="project" value="ComplexPortal"/>
</dbReference>
<dbReference type="GO" id="GO:0006357">
    <property type="term" value="P:regulation of transcription by RNA polymerase II"/>
    <property type="evidence" value="ECO:0000304"/>
    <property type="project" value="ProtInc"/>
</dbReference>
<dbReference type="CDD" id="cd18003">
    <property type="entry name" value="DEXQc_SRCAP"/>
    <property type="match status" value="1"/>
</dbReference>
<dbReference type="CDD" id="cd18793">
    <property type="entry name" value="SF2_C_SNF"/>
    <property type="match status" value="1"/>
</dbReference>
<dbReference type="FunFam" id="3.40.50.300:FF:000529">
    <property type="entry name" value="helicase SRCAP isoform X1"/>
    <property type="match status" value="1"/>
</dbReference>
<dbReference type="FunFam" id="3.40.50.10810:FF:000005">
    <property type="entry name" value="Photoperiod-independent early flowering 1"/>
    <property type="match status" value="1"/>
</dbReference>
<dbReference type="Gene3D" id="3.40.50.300">
    <property type="entry name" value="P-loop containing nucleotide triphosphate hydrolases"/>
    <property type="match status" value="1"/>
</dbReference>
<dbReference type="Gene3D" id="3.40.50.10810">
    <property type="entry name" value="Tandem AAA-ATPase domain"/>
    <property type="match status" value="1"/>
</dbReference>
<dbReference type="InterPro" id="IPR017956">
    <property type="entry name" value="AT_hook_DNA-bd_motif"/>
</dbReference>
<dbReference type="InterPro" id="IPR014001">
    <property type="entry name" value="Helicase_ATP-bd"/>
</dbReference>
<dbReference type="InterPro" id="IPR001650">
    <property type="entry name" value="Helicase_C-like"/>
</dbReference>
<dbReference type="InterPro" id="IPR014012">
    <property type="entry name" value="HSA_dom"/>
</dbReference>
<dbReference type="InterPro" id="IPR050520">
    <property type="entry name" value="INO80/SWR1_helicase"/>
</dbReference>
<dbReference type="InterPro" id="IPR027417">
    <property type="entry name" value="P-loop_NTPase"/>
</dbReference>
<dbReference type="InterPro" id="IPR038718">
    <property type="entry name" value="SNF2-like_sf"/>
</dbReference>
<dbReference type="InterPro" id="IPR049730">
    <property type="entry name" value="SNF2/RAD54-like_C"/>
</dbReference>
<dbReference type="InterPro" id="IPR000330">
    <property type="entry name" value="SNF2_N"/>
</dbReference>
<dbReference type="PANTHER" id="PTHR45685:SF1">
    <property type="entry name" value="HELICASE SRCAP"/>
    <property type="match status" value="1"/>
</dbReference>
<dbReference type="PANTHER" id="PTHR45685">
    <property type="entry name" value="HELICASE SRCAP-RELATED"/>
    <property type="match status" value="1"/>
</dbReference>
<dbReference type="Pfam" id="PF00271">
    <property type="entry name" value="Helicase_C"/>
    <property type="match status" value="1"/>
</dbReference>
<dbReference type="Pfam" id="PF07529">
    <property type="entry name" value="HSA"/>
    <property type="match status" value="1"/>
</dbReference>
<dbReference type="Pfam" id="PF00176">
    <property type="entry name" value="SNF2-rel_dom"/>
    <property type="match status" value="1"/>
</dbReference>
<dbReference type="PRINTS" id="PR00929">
    <property type="entry name" value="ATHOOK"/>
</dbReference>
<dbReference type="SMART" id="SM00384">
    <property type="entry name" value="AT_hook"/>
    <property type="match status" value="3"/>
</dbReference>
<dbReference type="SMART" id="SM00487">
    <property type="entry name" value="DEXDc"/>
    <property type="match status" value="1"/>
</dbReference>
<dbReference type="SMART" id="SM00490">
    <property type="entry name" value="HELICc"/>
    <property type="match status" value="1"/>
</dbReference>
<dbReference type="SMART" id="SM00573">
    <property type="entry name" value="HSA"/>
    <property type="match status" value="1"/>
</dbReference>
<dbReference type="SUPFAM" id="SSF52540">
    <property type="entry name" value="P-loop containing nucleoside triphosphate hydrolases"/>
    <property type="match status" value="3"/>
</dbReference>
<dbReference type="PROSITE" id="PS51192">
    <property type="entry name" value="HELICASE_ATP_BIND_1"/>
    <property type="match status" value="1"/>
</dbReference>
<dbReference type="PROSITE" id="PS51194">
    <property type="entry name" value="HELICASE_CTER"/>
    <property type="match status" value="1"/>
</dbReference>
<dbReference type="PROSITE" id="PS51204">
    <property type="entry name" value="HSA"/>
    <property type="match status" value="1"/>
</dbReference>
<gene>
    <name type="primary">SRCAP</name>
    <name type="synonym">KIAA0309</name>
</gene>
<name>SRCAP_HUMAN</name>